<reference key="1">
    <citation type="journal article" date="2008" name="PLoS Genet.">
        <title>Complete genome sequence of the N2-fixing broad host range endophyte Klebsiella pneumoniae 342 and virulence predictions verified in mice.</title>
        <authorList>
            <person name="Fouts D.E."/>
            <person name="Tyler H.L."/>
            <person name="DeBoy R.T."/>
            <person name="Daugherty S."/>
            <person name="Ren Q."/>
            <person name="Badger J.H."/>
            <person name="Durkin A.S."/>
            <person name="Huot H."/>
            <person name="Shrivastava S."/>
            <person name="Kothari S."/>
            <person name="Dodson R.J."/>
            <person name="Mohamoud Y."/>
            <person name="Khouri H."/>
            <person name="Roesch L.F.W."/>
            <person name="Krogfelt K.A."/>
            <person name="Struve C."/>
            <person name="Triplett E.W."/>
            <person name="Methe B.A."/>
        </authorList>
    </citation>
    <scope>NUCLEOTIDE SEQUENCE [LARGE SCALE GENOMIC DNA]</scope>
    <source>
        <strain>342</strain>
    </source>
</reference>
<keyword id="KW-0378">Hydrolase</keyword>
<keyword id="KW-0460">Magnesium</keyword>
<keyword id="KW-0479">Metal-binding</keyword>
<keyword id="KW-0546">Nucleotide metabolism</keyword>
<proteinExistence type="inferred from homology"/>
<name>DUT_KLEP3</name>
<evidence type="ECO:0000255" key="1">
    <source>
        <dbReference type="HAMAP-Rule" id="MF_00116"/>
    </source>
</evidence>
<dbReference type="EC" id="3.6.1.23" evidence="1"/>
<dbReference type="EMBL" id="CP000964">
    <property type="protein sequence ID" value="ACI11304.1"/>
    <property type="molecule type" value="Genomic_DNA"/>
</dbReference>
<dbReference type="SMR" id="B5XTG3"/>
<dbReference type="KEGG" id="kpe:KPK_0114"/>
<dbReference type="HOGENOM" id="CLU_068508_1_1_6"/>
<dbReference type="UniPathway" id="UPA00610">
    <property type="reaction ID" value="UER00666"/>
</dbReference>
<dbReference type="Proteomes" id="UP000001734">
    <property type="component" value="Chromosome"/>
</dbReference>
<dbReference type="GO" id="GO:0004170">
    <property type="term" value="F:dUTP diphosphatase activity"/>
    <property type="evidence" value="ECO:0007669"/>
    <property type="project" value="UniProtKB-UniRule"/>
</dbReference>
<dbReference type="GO" id="GO:0000287">
    <property type="term" value="F:magnesium ion binding"/>
    <property type="evidence" value="ECO:0007669"/>
    <property type="project" value="UniProtKB-UniRule"/>
</dbReference>
<dbReference type="GO" id="GO:0006226">
    <property type="term" value="P:dUMP biosynthetic process"/>
    <property type="evidence" value="ECO:0007669"/>
    <property type="project" value="UniProtKB-UniRule"/>
</dbReference>
<dbReference type="GO" id="GO:0046081">
    <property type="term" value="P:dUTP catabolic process"/>
    <property type="evidence" value="ECO:0007669"/>
    <property type="project" value="InterPro"/>
</dbReference>
<dbReference type="CDD" id="cd07557">
    <property type="entry name" value="trimeric_dUTPase"/>
    <property type="match status" value="1"/>
</dbReference>
<dbReference type="FunFam" id="2.70.40.10:FF:000002">
    <property type="entry name" value="dUTP diphosphatase"/>
    <property type="match status" value="1"/>
</dbReference>
<dbReference type="Gene3D" id="2.70.40.10">
    <property type="match status" value="1"/>
</dbReference>
<dbReference type="HAMAP" id="MF_00116">
    <property type="entry name" value="dUTPase_bact"/>
    <property type="match status" value="1"/>
</dbReference>
<dbReference type="InterPro" id="IPR008181">
    <property type="entry name" value="dUTPase"/>
</dbReference>
<dbReference type="InterPro" id="IPR029054">
    <property type="entry name" value="dUTPase-like"/>
</dbReference>
<dbReference type="InterPro" id="IPR036157">
    <property type="entry name" value="dUTPase-like_sf"/>
</dbReference>
<dbReference type="InterPro" id="IPR033704">
    <property type="entry name" value="dUTPase_trimeric"/>
</dbReference>
<dbReference type="NCBIfam" id="TIGR00576">
    <property type="entry name" value="dut"/>
    <property type="match status" value="1"/>
</dbReference>
<dbReference type="NCBIfam" id="NF001862">
    <property type="entry name" value="PRK00601.1"/>
    <property type="match status" value="1"/>
</dbReference>
<dbReference type="PANTHER" id="PTHR11241">
    <property type="entry name" value="DEOXYURIDINE 5'-TRIPHOSPHATE NUCLEOTIDOHYDROLASE"/>
    <property type="match status" value="1"/>
</dbReference>
<dbReference type="PANTHER" id="PTHR11241:SF0">
    <property type="entry name" value="DEOXYURIDINE 5'-TRIPHOSPHATE NUCLEOTIDOHYDROLASE"/>
    <property type="match status" value="1"/>
</dbReference>
<dbReference type="Pfam" id="PF00692">
    <property type="entry name" value="dUTPase"/>
    <property type="match status" value="1"/>
</dbReference>
<dbReference type="SUPFAM" id="SSF51283">
    <property type="entry name" value="dUTPase-like"/>
    <property type="match status" value="1"/>
</dbReference>
<organism>
    <name type="scientific">Klebsiella pneumoniae (strain 342)</name>
    <dbReference type="NCBI Taxonomy" id="507522"/>
    <lineage>
        <taxon>Bacteria</taxon>
        <taxon>Pseudomonadati</taxon>
        <taxon>Pseudomonadota</taxon>
        <taxon>Gammaproteobacteria</taxon>
        <taxon>Enterobacterales</taxon>
        <taxon>Enterobacteriaceae</taxon>
        <taxon>Klebsiella/Raoultella group</taxon>
        <taxon>Klebsiella</taxon>
        <taxon>Klebsiella pneumoniae complex</taxon>
    </lineage>
</organism>
<gene>
    <name evidence="1" type="primary">dut</name>
    <name type="ordered locus">KPK_0114</name>
</gene>
<comment type="function">
    <text evidence="1">This enzyme is involved in nucleotide metabolism: it produces dUMP, the immediate precursor of thymidine nucleotides and it decreases the intracellular concentration of dUTP so that uracil cannot be incorporated into DNA.</text>
</comment>
<comment type="catalytic activity">
    <reaction evidence="1">
        <text>dUTP + H2O = dUMP + diphosphate + H(+)</text>
        <dbReference type="Rhea" id="RHEA:10248"/>
        <dbReference type="ChEBI" id="CHEBI:15377"/>
        <dbReference type="ChEBI" id="CHEBI:15378"/>
        <dbReference type="ChEBI" id="CHEBI:33019"/>
        <dbReference type="ChEBI" id="CHEBI:61555"/>
        <dbReference type="ChEBI" id="CHEBI:246422"/>
        <dbReference type="EC" id="3.6.1.23"/>
    </reaction>
</comment>
<comment type="cofactor">
    <cofactor evidence="1">
        <name>Mg(2+)</name>
        <dbReference type="ChEBI" id="CHEBI:18420"/>
    </cofactor>
</comment>
<comment type="pathway">
    <text evidence="1">Pyrimidine metabolism; dUMP biosynthesis; dUMP from dCTP (dUTP route): step 2/2.</text>
</comment>
<comment type="similarity">
    <text evidence="1">Belongs to the dUTPase family.</text>
</comment>
<accession>B5XTG3</accession>
<feature type="chain" id="PRO_1000094970" description="Deoxyuridine 5'-triphosphate nucleotidohydrolase">
    <location>
        <begin position="1"/>
        <end position="152"/>
    </location>
</feature>
<feature type="binding site" evidence="1">
    <location>
        <begin position="71"/>
        <end position="73"/>
    </location>
    <ligand>
        <name>substrate</name>
    </ligand>
</feature>
<feature type="binding site" evidence="1">
    <location>
        <position position="84"/>
    </location>
    <ligand>
        <name>substrate</name>
    </ligand>
</feature>
<feature type="binding site" evidence="1">
    <location>
        <begin position="88"/>
        <end position="90"/>
    </location>
    <ligand>
        <name>substrate</name>
    </ligand>
</feature>
<feature type="binding site" evidence="1">
    <location>
        <position position="98"/>
    </location>
    <ligand>
        <name>substrate</name>
    </ligand>
</feature>
<sequence length="152" mass="16205">MMKKIDVKILDPRVGQQFPLPTYATSGSAGLDLRACLDDAVELAPGATTLLPTGLAIHIADPSLAAVILPRSGLGHKHGVVLGNLVGLIDSDYQGQLMVSVWNRGQQSFIIEPGERIAQMVFVPVVQAEFNLVEEFDATDRGEGGFGHSGRK</sequence>
<protein>
    <recommendedName>
        <fullName evidence="1">Deoxyuridine 5'-triphosphate nucleotidohydrolase</fullName>
        <shortName evidence="1">dUTPase</shortName>
        <ecNumber evidence="1">3.6.1.23</ecNumber>
    </recommendedName>
    <alternativeName>
        <fullName evidence="1">dUTP pyrophosphatase</fullName>
    </alternativeName>
</protein>